<protein>
    <recommendedName>
        <fullName evidence="1">Bifunctional protein HldE</fullName>
    </recommendedName>
    <domain>
        <recommendedName>
            <fullName evidence="1">D-beta-D-heptose 7-phosphate kinase</fullName>
            <ecNumber evidence="1">2.7.1.167</ecNumber>
        </recommendedName>
        <alternativeName>
            <fullName evidence="1">D-beta-D-heptose 7-phosphotransferase</fullName>
        </alternativeName>
        <alternativeName>
            <fullName evidence="1">D-glycero-beta-D-manno-heptose-7-phosphate kinase</fullName>
        </alternativeName>
    </domain>
    <domain>
        <recommendedName>
            <fullName evidence="1">D-beta-D-heptose 1-phosphate adenylyltransferase</fullName>
            <ecNumber evidence="1">2.7.7.70</ecNumber>
        </recommendedName>
        <alternativeName>
            <fullName evidence="1">D-glycero-beta-D-manno-heptose 1-phosphate adenylyltransferase</fullName>
        </alternativeName>
    </domain>
</protein>
<evidence type="ECO:0000255" key="1">
    <source>
        <dbReference type="HAMAP-Rule" id="MF_01603"/>
    </source>
</evidence>
<proteinExistence type="inferred from homology"/>
<accession>A9N5X8</accession>
<organism>
    <name type="scientific">Salmonella paratyphi B (strain ATCC BAA-1250 / SPB7)</name>
    <dbReference type="NCBI Taxonomy" id="1016998"/>
    <lineage>
        <taxon>Bacteria</taxon>
        <taxon>Pseudomonadati</taxon>
        <taxon>Pseudomonadota</taxon>
        <taxon>Gammaproteobacteria</taxon>
        <taxon>Enterobacterales</taxon>
        <taxon>Enterobacteriaceae</taxon>
        <taxon>Salmonella</taxon>
    </lineage>
</organism>
<keyword id="KW-0067">ATP-binding</keyword>
<keyword id="KW-0119">Carbohydrate metabolism</keyword>
<keyword id="KW-0418">Kinase</keyword>
<keyword id="KW-0511">Multifunctional enzyme</keyword>
<keyword id="KW-0547">Nucleotide-binding</keyword>
<keyword id="KW-0548">Nucleotidyltransferase</keyword>
<keyword id="KW-0808">Transferase</keyword>
<dbReference type="EC" id="2.7.1.167" evidence="1"/>
<dbReference type="EC" id="2.7.7.70" evidence="1"/>
<dbReference type="EMBL" id="CP000886">
    <property type="protein sequence ID" value="ABX69324.1"/>
    <property type="molecule type" value="Genomic_DNA"/>
</dbReference>
<dbReference type="RefSeq" id="WP_000867682.1">
    <property type="nucleotide sequence ID" value="NC_010102.1"/>
</dbReference>
<dbReference type="SMR" id="A9N5X8"/>
<dbReference type="KEGG" id="spq:SPAB_03995"/>
<dbReference type="PATRIC" id="fig|1016998.12.peg.3766"/>
<dbReference type="HOGENOM" id="CLU_021150_2_1_6"/>
<dbReference type="BioCyc" id="SENT1016998:SPAB_RS16220-MONOMER"/>
<dbReference type="UniPathway" id="UPA00356">
    <property type="reaction ID" value="UER00437"/>
</dbReference>
<dbReference type="UniPathway" id="UPA00356">
    <property type="reaction ID" value="UER00439"/>
</dbReference>
<dbReference type="Proteomes" id="UP000008556">
    <property type="component" value="Chromosome"/>
</dbReference>
<dbReference type="GO" id="GO:0005829">
    <property type="term" value="C:cytosol"/>
    <property type="evidence" value="ECO:0007669"/>
    <property type="project" value="TreeGrafter"/>
</dbReference>
<dbReference type="GO" id="GO:0005524">
    <property type="term" value="F:ATP binding"/>
    <property type="evidence" value="ECO:0007669"/>
    <property type="project" value="UniProtKB-UniRule"/>
</dbReference>
<dbReference type="GO" id="GO:0033785">
    <property type="term" value="F:heptose 7-phosphate kinase activity"/>
    <property type="evidence" value="ECO:0007669"/>
    <property type="project" value="UniProtKB-UniRule"/>
</dbReference>
<dbReference type="GO" id="GO:0033786">
    <property type="term" value="F:heptose-1-phosphate adenylyltransferase activity"/>
    <property type="evidence" value="ECO:0007669"/>
    <property type="project" value="UniProtKB-UniRule"/>
</dbReference>
<dbReference type="GO" id="GO:0016773">
    <property type="term" value="F:phosphotransferase activity, alcohol group as acceptor"/>
    <property type="evidence" value="ECO:0007669"/>
    <property type="project" value="InterPro"/>
</dbReference>
<dbReference type="GO" id="GO:0097171">
    <property type="term" value="P:ADP-L-glycero-beta-D-manno-heptose biosynthetic process"/>
    <property type="evidence" value="ECO:0007669"/>
    <property type="project" value="UniProtKB-UniPathway"/>
</dbReference>
<dbReference type="CDD" id="cd01172">
    <property type="entry name" value="RfaE_like"/>
    <property type="match status" value="1"/>
</dbReference>
<dbReference type="FunFam" id="3.40.1190.20:FF:000002">
    <property type="entry name" value="Bifunctional protein HldE"/>
    <property type="match status" value="1"/>
</dbReference>
<dbReference type="FunFam" id="3.40.50.620:FF:000028">
    <property type="entry name" value="Bifunctional protein HldE"/>
    <property type="match status" value="1"/>
</dbReference>
<dbReference type="Gene3D" id="3.40.1190.20">
    <property type="match status" value="1"/>
</dbReference>
<dbReference type="Gene3D" id="3.40.50.620">
    <property type="entry name" value="HUPs"/>
    <property type="match status" value="1"/>
</dbReference>
<dbReference type="HAMAP" id="MF_01603">
    <property type="entry name" value="HldE"/>
    <property type="match status" value="1"/>
</dbReference>
<dbReference type="InterPro" id="IPR023030">
    <property type="entry name" value="Bifunc_HldE"/>
</dbReference>
<dbReference type="InterPro" id="IPR002173">
    <property type="entry name" value="Carboh/pur_kinase_PfkB_CS"/>
</dbReference>
<dbReference type="InterPro" id="IPR004821">
    <property type="entry name" value="Cyt_trans-like"/>
</dbReference>
<dbReference type="InterPro" id="IPR011611">
    <property type="entry name" value="PfkB_dom"/>
</dbReference>
<dbReference type="InterPro" id="IPR011913">
    <property type="entry name" value="RfaE_dom_I"/>
</dbReference>
<dbReference type="InterPro" id="IPR011914">
    <property type="entry name" value="RfaE_dom_II"/>
</dbReference>
<dbReference type="InterPro" id="IPR029056">
    <property type="entry name" value="Ribokinase-like"/>
</dbReference>
<dbReference type="InterPro" id="IPR014729">
    <property type="entry name" value="Rossmann-like_a/b/a_fold"/>
</dbReference>
<dbReference type="NCBIfam" id="TIGR00125">
    <property type="entry name" value="cyt_tran_rel"/>
    <property type="match status" value="1"/>
</dbReference>
<dbReference type="NCBIfam" id="NF008454">
    <property type="entry name" value="PRK11316.1"/>
    <property type="match status" value="1"/>
</dbReference>
<dbReference type="NCBIfam" id="TIGR02198">
    <property type="entry name" value="rfaE_dom_I"/>
    <property type="match status" value="1"/>
</dbReference>
<dbReference type="NCBIfam" id="TIGR02199">
    <property type="entry name" value="rfaE_dom_II"/>
    <property type="match status" value="1"/>
</dbReference>
<dbReference type="PANTHER" id="PTHR46969">
    <property type="entry name" value="BIFUNCTIONAL PROTEIN HLDE"/>
    <property type="match status" value="1"/>
</dbReference>
<dbReference type="PANTHER" id="PTHR46969:SF1">
    <property type="entry name" value="BIFUNCTIONAL PROTEIN HLDE"/>
    <property type="match status" value="1"/>
</dbReference>
<dbReference type="Pfam" id="PF01467">
    <property type="entry name" value="CTP_transf_like"/>
    <property type="match status" value="1"/>
</dbReference>
<dbReference type="Pfam" id="PF00294">
    <property type="entry name" value="PfkB"/>
    <property type="match status" value="1"/>
</dbReference>
<dbReference type="SUPFAM" id="SSF52374">
    <property type="entry name" value="Nucleotidylyl transferase"/>
    <property type="match status" value="1"/>
</dbReference>
<dbReference type="SUPFAM" id="SSF53613">
    <property type="entry name" value="Ribokinase-like"/>
    <property type="match status" value="1"/>
</dbReference>
<dbReference type="PROSITE" id="PS00583">
    <property type="entry name" value="PFKB_KINASES_1"/>
    <property type="match status" value="1"/>
</dbReference>
<sequence length="477" mass="51124">MKVNLPAFERAGVMVVGDVMLDRYWYGPTCRISPEAPVPVVKVNTVEERPGGAANVAMNIASLGANARLVGLTGIDDAARALSKTLAEVNVKCDFVSVPTHPTITKLRVLSRNQQLIRLDFEEGFEGVDPQPLHERINQALGSIGALVLSDYAKGALTSVQTMISLARQAGVPVLIDPKGTDFERYRGATLLTPNLSEFEAVAGKCKSEDELVERGMKLIADYDLSALLVTRSEQGMTLLQPNKAPLHMPTQAQEVYDVTGAGDTVIGVLAATLAAGNTLEEACYFANAAAGVVVGKLGTSTVSPIELENAVRGRADTGFGVMTEEELRQAVASARKRGEKVVMTNGVFDILHAGHVSYLANARKLGDRLIVAVNSDASTKRLKGESRPVNPLEQRMIVLGALESVDWVVSFEEDTPQRLIAGILPDLLVKGGDYKPEEIAGSEEVWANGGEVMVLNFEDGCSTTNIIKKIQTESEK</sequence>
<gene>
    <name evidence="1" type="primary">hldE</name>
    <name type="ordered locus">SPAB_03995</name>
</gene>
<comment type="function">
    <text evidence="1">Catalyzes the phosphorylation of D-glycero-D-manno-heptose 7-phosphate at the C-1 position to selectively form D-glycero-beta-D-manno-heptose-1,7-bisphosphate.</text>
</comment>
<comment type="function">
    <text evidence="1">Catalyzes the ADP transfer from ATP to D-glycero-beta-D-manno-heptose 1-phosphate, yielding ADP-D-glycero-beta-D-manno-heptose.</text>
</comment>
<comment type="catalytic activity">
    <reaction evidence="1">
        <text>D-glycero-beta-D-manno-heptose 7-phosphate + ATP = D-glycero-beta-D-manno-heptose 1,7-bisphosphate + ADP + H(+)</text>
        <dbReference type="Rhea" id="RHEA:27473"/>
        <dbReference type="ChEBI" id="CHEBI:15378"/>
        <dbReference type="ChEBI" id="CHEBI:30616"/>
        <dbReference type="ChEBI" id="CHEBI:60204"/>
        <dbReference type="ChEBI" id="CHEBI:60208"/>
        <dbReference type="ChEBI" id="CHEBI:456216"/>
        <dbReference type="EC" id="2.7.1.167"/>
    </reaction>
</comment>
<comment type="catalytic activity">
    <reaction evidence="1">
        <text>D-glycero-beta-D-manno-heptose 1-phosphate + ATP + H(+) = ADP-D-glycero-beta-D-manno-heptose + diphosphate</text>
        <dbReference type="Rhea" id="RHEA:27465"/>
        <dbReference type="ChEBI" id="CHEBI:15378"/>
        <dbReference type="ChEBI" id="CHEBI:30616"/>
        <dbReference type="ChEBI" id="CHEBI:33019"/>
        <dbReference type="ChEBI" id="CHEBI:59967"/>
        <dbReference type="ChEBI" id="CHEBI:61593"/>
        <dbReference type="EC" id="2.7.7.70"/>
    </reaction>
</comment>
<comment type="pathway">
    <text evidence="1">Nucleotide-sugar biosynthesis; ADP-L-glycero-beta-D-manno-heptose biosynthesis; ADP-L-glycero-beta-D-manno-heptose from D-glycero-beta-D-manno-heptose 7-phosphate: step 1/4.</text>
</comment>
<comment type="pathway">
    <text evidence="1">Nucleotide-sugar biosynthesis; ADP-L-glycero-beta-D-manno-heptose biosynthesis; ADP-L-glycero-beta-D-manno-heptose from D-glycero-beta-D-manno-heptose 7-phosphate: step 3/4.</text>
</comment>
<comment type="subunit">
    <text evidence="1">Homodimer.</text>
</comment>
<comment type="similarity">
    <text evidence="1">In the N-terminal section; belongs to the carbohydrate kinase PfkB family.</text>
</comment>
<comment type="similarity">
    <text evidence="1">In the C-terminal section; belongs to the cytidylyltransferase family.</text>
</comment>
<reference key="1">
    <citation type="submission" date="2007-11" db="EMBL/GenBank/DDBJ databases">
        <authorList>
            <consortium name="The Salmonella enterica serovar Paratyphi B Genome Sequencing Project"/>
            <person name="McClelland M."/>
            <person name="Sanderson E.K."/>
            <person name="Porwollik S."/>
            <person name="Spieth J."/>
            <person name="Clifton W.S."/>
            <person name="Fulton R."/>
            <person name="Cordes M."/>
            <person name="Wollam A."/>
            <person name="Shah N."/>
            <person name="Pepin K."/>
            <person name="Bhonagiri V."/>
            <person name="Nash W."/>
            <person name="Johnson M."/>
            <person name="Thiruvilangam P."/>
            <person name="Wilson R."/>
        </authorList>
    </citation>
    <scope>NUCLEOTIDE SEQUENCE [LARGE SCALE GENOMIC DNA]</scope>
    <source>
        <strain>ATCC BAA-1250 / SPB7</strain>
    </source>
</reference>
<name>HLDE_SALPB</name>
<feature type="chain" id="PRO_1000185820" description="Bifunctional protein HldE">
    <location>
        <begin position="1"/>
        <end position="477"/>
    </location>
</feature>
<feature type="region of interest" description="Ribokinase">
    <location>
        <begin position="1"/>
        <end position="318"/>
    </location>
</feature>
<feature type="region of interest" description="Cytidylyltransferase">
    <location>
        <begin position="344"/>
        <end position="477"/>
    </location>
</feature>
<feature type="active site" evidence="1">
    <location>
        <position position="264"/>
    </location>
</feature>
<feature type="binding site" evidence="1">
    <location>
        <begin position="195"/>
        <end position="198"/>
    </location>
    <ligand>
        <name>ATP</name>
        <dbReference type="ChEBI" id="CHEBI:30616"/>
    </ligand>
</feature>